<accession>Q9NPP4</accession>
<accession>A8K9F8</accession>
<accession>B2RBQ3</accession>
<accession>B3KTF0</accession>
<accession>D6W580</accession>
<accession>Q96J81</accession>
<accession>Q96J82</accession>
<accession>Q96J83</accession>
<name>NLRC4_HUMAN</name>
<gene>
    <name type="primary">NLRC4</name>
    <name evidence="12" type="synonym">CARD12</name>
    <name evidence="14" type="synonym">CLAN</name>
    <name type="synonym">CLAN1</name>
    <name evidence="13" type="synonym">IPAF</name>
    <name type="ORF">UNQ6189/PRO20215</name>
</gene>
<keyword id="KW-0002">3D-structure</keyword>
<keyword id="KW-0025">Alternative splicing</keyword>
<keyword id="KW-0053">Apoptosis</keyword>
<keyword id="KW-0067">ATP-binding</keyword>
<keyword id="KW-0963">Cytoplasm</keyword>
<keyword id="KW-0225">Disease variant</keyword>
<keyword id="KW-0391">Immunity</keyword>
<keyword id="KW-1271">Inflammasome</keyword>
<keyword id="KW-0395">Inflammatory response</keyword>
<keyword id="KW-0399">Innate immunity</keyword>
<keyword id="KW-0433">Leucine-rich repeat</keyword>
<keyword id="KW-0547">Nucleotide-binding</keyword>
<keyword id="KW-0597">Phosphoprotein</keyword>
<keyword id="KW-1267">Proteomics identification</keyword>
<keyword id="KW-1185">Reference proteome</keyword>
<keyword id="KW-0677">Repeat</keyword>
<dbReference type="EMBL" id="AY032589">
    <property type="protein sequence ID" value="AAK38730.1"/>
    <property type="molecule type" value="mRNA"/>
</dbReference>
<dbReference type="EMBL" id="AY027787">
    <property type="protein sequence ID" value="AAK14776.1"/>
    <property type="molecule type" value="mRNA"/>
</dbReference>
<dbReference type="EMBL" id="AY027788">
    <property type="protein sequence ID" value="AAK14777.1"/>
    <property type="molecule type" value="mRNA"/>
</dbReference>
<dbReference type="EMBL" id="AY027789">
    <property type="protein sequence ID" value="AAK14778.1"/>
    <property type="molecule type" value="mRNA"/>
</dbReference>
<dbReference type="EMBL" id="AY027790">
    <property type="protein sequence ID" value="AAK14779.1"/>
    <property type="molecule type" value="mRNA"/>
</dbReference>
<dbReference type="EMBL" id="AY035391">
    <property type="protein sequence ID" value="AAK59843.1"/>
    <property type="molecule type" value="mRNA"/>
</dbReference>
<dbReference type="EMBL" id="AF376061">
    <property type="protein sequence ID" value="AAK53443.1"/>
    <property type="molecule type" value="mRNA"/>
</dbReference>
<dbReference type="EMBL" id="AY358152">
    <property type="protein sequence ID" value="AAQ88519.1"/>
    <property type="molecule type" value="mRNA"/>
</dbReference>
<dbReference type="EMBL" id="AK095467">
    <property type="protein sequence ID" value="BAG53062.1"/>
    <property type="molecule type" value="mRNA"/>
</dbReference>
<dbReference type="EMBL" id="AK292673">
    <property type="protein sequence ID" value="BAF85362.1"/>
    <property type="molecule type" value="mRNA"/>
</dbReference>
<dbReference type="EMBL" id="AK314762">
    <property type="protein sequence ID" value="BAG37300.1"/>
    <property type="molecule type" value="mRNA"/>
</dbReference>
<dbReference type="EMBL" id="AL121653">
    <property type="status" value="NOT_ANNOTATED_CDS"/>
    <property type="molecule type" value="Genomic_DNA"/>
</dbReference>
<dbReference type="EMBL" id="CH471053">
    <property type="protein sequence ID" value="EAX00452.1"/>
    <property type="molecule type" value="Genomic_DNA"/>
</dbReference>
<dbReference type="EMBL" id="CH471053">
    <property type="protein sequence ID" value="EAX00453.1"/>
    <property type="molecule type" value="Genomic_DNA"/>
</dbReference>
<dbReference type="EMBL" id="CH471053">
    <property type="protein sequence ID" value="EAX00454.1"/>
    <property type="molecule type" value="Genomic_DNA"/>
</dbReference>
<dbReference type="EMBL" id="CH471053">
    <property type="protein sequence ID" value="EAX00455.1"/>
    <property type="molecule type" value="Genomic_DNA"/>
</dbReference>
<dbReference type="EMBL" id="BC031555">
    <property type="protein sequence ID" value="AAH31555.1"/>
    <property type="molecule type" value="mRNA"/>
</dbReference>
<dbReference type="EMBL" id="AL389934">
    <property type="protein sequence ID" value="CAB97523.1"/>
    <property type="molecule type" value="mRNA"/>
</dbReference>
<dbReference type="CCDS" id="CCDS33174.1">
    <molecule id="Q9NPP4-1"/>
</dbReference>
<dbReference type="CCDS" id="CCDS77400.1">
    <molecule id="Q9NPP4-2"/>
</dbReference>
<dbReference type="RefSeq" id="NP_001186067.1">
    <molecule id="Q9NPP4-1"/>
    <property type="nucleotide sequence ID" value="NM_001199138.2"/>
</dbReference>
<dbReference type="RefSeq" id="NP_001186068.1">
    <molecule id="Q9NPP4-1"/>
    <property type="nucleotide sequence ID" value="NM_001199139.1"/>
</dbReference>
<dbReference type="RefSeq" id="NP_001289433.1">
    <molecule id="Q9NPP4-2"/>
    <property type="nucleotide sequence ID" value="NM_001302504.1"/>
</dbReference>
<dbReference type="RefSeq" id="NP_067032.3">
    <molecule id="Q9NPP4-1"/>
    <property type="nucleotide sequence ID" value="NM_021209.4"/>
</dbReference>
<dbReference type="PDB" id="6K8J">
    <property type="method" value="EM"/>
    <property type="resolution" value="3.30 A"/>
    <property type="chains" value="A/B/C/D/E/F/G/H/I/J/K/L=1-85"/>
</dbReference>
<dbReference type="PDB" id="6MKS">
    <property type="method" value="EM"/>
    <property type="resolution" value="3.40 A"/>
    <property type="chains" value="A/B/C/D/E/F/G/H/I/J/K/L/M/N/O/P/Q/R/S/T/U/V/W/X/Y/Z/a/b/c/d=1-96"/>
</dbReference>
<dbReference type="PDB" id="6N1I">
    <property type="method" value="EM"/>
    <property type="resolution" value="3.58 A"/>
    <property type="chains" value="A/B/C/D/E/F/G/H/I/J/K/L/M/N/O/P=1-85"/>
</dbReference>
<dbReference type="PDB" id="8FVU">
    <property type="method" value="EM"/>
    <property type="resolution" value="3.60 A"/>
    <property type="chains" value="B=1-1024"/>
</dbReference>
<dbReference type="PDB" id="8FW2">
    <property type="method" value="EM"/>
    <property type="resolution" value="3.80 A"/>
    <property type="chains" value="A/B/C=1-1024"/>
</dbReference>
<dbReference type="PDB" id="8FW9">
    <property type="method" value="EM"/>
    <property type="resolution" value="4.46 A"/>
    <property type="chains" value="A/B/C=1-1024"/>
</dbReference>
<dbReference type="PDBsum" id="6K8J"/>
<dbReference type="PDBsum" id="6MKS"/>
<dbReference type="PDBsum" id="6N1I"/>
<dbReference type="PDBsum" id="8FVU"/>
<dbReference type="PDBsum" id="8FW2"/>
<dbReference type="PDBsum" id="8FW9"/>
<dbReference type="EMDB" id="EMD-29493"/>
<dbReference type="EMDB" id="EMD-29496"/>
<dbReference type="EMDB" id="EMD-29498"/>
<dbReference type="EMDB" id="EMD-8903"/>
<dbReference type="EMDB" id="EMD-9946"/>
<dbReference type="SMR" id="Q9NPP4"/>
<dbReference type="BioGRID" id="121814">
    <property type="interactions" value="18"/>
</dbReference>
<dbReference type="ComplexPortal" id="CPX-4144">
    <property type="entry name" value="NLRC4 inflammasome"/>
</dbReference>
<dbReference type="CORUM" id="Q9NPP4"/>
<dbReference type="DIP" id="DIP-38428N"/>
<dbReference type="FunCoup" id="Q9NPP4">
    <property type="interactions" value="337"/>
</dbReference>
<dbReference type="IntAct" id="Q9NPP4">
    <property type="interactions" value="8"/>
</dbReference>
<dbReference type="STRING" id="9606.ENSP00000385428"/>
<dbReference type="BindingDB" id="Q9NPP4"/>
<dbReference type="ChEMBL" id="CHEMBL4630857"/>
<dbReference type="iPTMnet" id="Q9NPP4"/>
<dbReference type="PhosphoSitePlus" id="Q9NPP4"/>
<dbReference type="BioMuta" id="NLRC4"/>
<dbReference type="DMDM" id="20138032"/>
<dbReference type="jPOST" id="Q9NPP4"/>
<dbReference type="MassIVE" id="Q9NPP4"/>
<dbReference type="PaxDb" id="9606-ENSP00000385090"/>
<dbReference type="PeptideAtlas" id="Q9NPP4"/>
<dbReference type="ProteomicsDB" id="82036">
    <molecule id="Q9NPP4-1"/>
</dbReference>
<dbReference type="ProteomicsDB" id="82037">
    <molecule id="Q9NPP4-2"/>
</dbReference>
<dbReference type="ProteomicsDB" id="82038">
    <molecule id="Q9NPP4-3"/>
</dbReference>
<dbReference type="Antibodypedia" id="14265">
    <property type="antibodies" value="341 antibodies from 37 providers"/>
</dbReference>
<dbReference type="DNASU" id="58484"/>
<dbReference type="Ensembl" id="ENST00000342905.10">
    <molecule id="Q9NPP4-2"/>
    <property type="protein sequence ID" value="ENSP00000339666.6"/>
    <property type="gene ID" value="ENSG00000091106.19"/>
</dbReference>
<dbReference type="Ensembl" id="ENST00000360906.9">
    <molecule id="Q9NPP4-1"/>
    <property type="protein sequence ID" value="ENSP00000354159.5"/>
    <property type="gene ID" value="ENSG00000091106.19"/>
</dbReference>
<dbReference type="Ensembl" id="ENST00000402280.6">
    <molecule id="Q9NPP4-1"/>
    <property type="protein sequence ID" value="ENSP00000385428.1"/>
    <property type="gene ID" value="ENSG00000091106.19"/>
</dbReference>
<dbReference type="GeneID" id="58484"/>
<dbReference type="KEGG" id="hsa:58484"/>
<dbReference type="MANE-Select" id="ENST00000402280.6">
    <property type="protein sequence ID" value="ENSP00000385428.1"/>
    <property type="RefSeq nucleotide sequence ID" value="NM_001199138.2"/>
    <property type="RefSeq protein sequence ID" value="NP_001186067.1"/>
</dbReference>
<dbReference type="UCSC" id="uc002roi.4">
    <molecule id="Q9NPP4-1"/>
    <property type="organism name" value="human"/>
</dbReference>
<dbReference type="AGR" id="HGNC:16412"/>
<dbReference type="CTD" id="58484"/>
<dbReference type="DisGeNET" id="58484"/>
<dbReference type="GeneCards" id="NLRC4"/>
<dbReference type="HGNC" id="HGNC:16412">
    <property type="gene designation" value="NLRC4"/>
</dbReference>
<dbReference type="HPA" id="ENSG00000091106">
    <property type="expression patterns" value="Tissue enhanced (bone marrow, lymphoid tissue)"/>
</dbReference>
<dbReference type="MalaCards" id="NLRC4"/>
<dbReference type="MIM" id="606831">
    <property type="type" value="gene"/>
</dbReference>
<dbReference type="MIM" id="616050">
    <property type="type" value="phenotype"/>
</dbReference>
<dbReference type="MIM" id="616115">
    <property type="type" value="phenotype"/>
</dbReference>
<dbReference type="neXtProt" id="NX_Q9NPP4"/>
<dbReference type="OpenTargets" id="ENSG00000091106"/>
<dbReference type="Orphanet" id="576349">
    <property type="disease" value="NLRC4-related familial cold autoinflammatory syndrome"/>
</dbReference>
<dbReference type="Orphanet" id="436166">
    <property type="disease" value="Periodic fever-infantile enterocolitis-autoinflammatory syndrome"/>
</dbReference>
<dbReference type="PharmGKB" id="PA162397671"/>
<dbReference type="VEuPathDB" id="HostDB:ENSG00000091106"/>
<dbReference type="eggNOG" id="ENOG502QWRJ">
    <property type="taxonomic scope" value="Eukaryota"/>
</dbReference>
<dbReference type="GeneTree" id="ENSGT00940000161744"/>
<dbReference type="HOGENOM" id="CLU_011683_0_0_1"/>
<dbReference type="InParanoid" id="Q9NPP4"/>
<dbReference type="OMA" id="KDWYHTP"/>
<dbReference type="OrthoDB" id="9475700at2759"/>
<dbReference type="PAN-GO" id="Q9NPP4">
    <property type="GO annotations" value="2 GO annotations based on evolutionary models"/>
</dbReference>
<dbReference type="PhylomeDB" id="Q9NPP4"/>
<dbReference type="TreeFam" id="TF336864"/>
<dbReference type="PathwayCommons" id="Q9NPP4"/>
<dbReference type="Reactome" id="R-HSA-6803207">
    <property type="pathway name" value="TP53 Regulates Transcription of Caspase Activators and Caspases"/>
</dbReference>
<dbReference type="Reactome" id="R-HSA-844623">
    <property type="pathway name" value="The IPAF inflammasome"/>
</dbReference>
<dbReference type="SignaLink" id="Q9NPP4"/>
<dbReference type="SIGNOR" id="Q9NPP4"/>
<dbReference type="BioGRID-ORCS" id="58484">
    <property type="hits" value="12 hits in 1146 CRISPR screens"/>
</dbReference>
<dbReference type="GeneWiki" id="NLRC4"/>
<dbReference type="GenomeRNAi" id="58484"/>
<dbReference type="Pharos" id="Q9NPP4">
    <property type="development level" value="Tbio"/>
</dbReference>
<dbReference type="PRO" id="PR:Q9NPP4"/>
<dbReference type="Proteomes" id="UP000005640">
    <property type="component" value="Chromosome 2"/>
</dbReference>
<dbReference type="RNAct" id="Q9NPP4">
    <property type="molecule type" value="protein"/>
</dbReference>
<dbReference type="Bgee" id="ENSG00000091106">
    <property type="expression patterns" value="Expressed in monocyte and 103 other cell types or tissues"/>
</dbReference>
<dbReference type="ExpressionAtlas" id="Q9NPP4">
    <property type="expression patterns" value="baseline and differential"/>
</dbReference>
<dbReference type="GO" id="GO:0061702">
    <property type="term" value="C:canonical inflammasome complex"/>
    <property type="evidence" value="ECO:0000303"/>
    <property type="project" value="ComplexPortal"/>
</dbReference>
<dbReference type="GO" id="GO:0005737">
    <property type="term" value="C:cytoplasm"/>
    <property type="evidence" value="ECO:0000303"/>
    <property type="project" value="ComplexPortal"/>
</dbReference>
<dbReference type="GO" id="GO:0005829">
    <property type="term" value="C:cytosol"/>
    <property type="evidence" value="ECO:0000314"/>
    <property type="project" value="HPA"/>
</dbReference>
<dbReference type="GO" id="GO:0043231">
    <property type="term" value="C:intracellular membrane-bounded organelle"/>
    <property type="evidence" value="ECO:0000314"/>
    <property type="project" value="HPA"/>
</dbReference>
<dbReference type="GO" id="GO:0072557">
    <property type="term" value="C:IPAF inflammasome complex"/>
    <property type="evidence" value="ECO:0000250"/>
    <property type="project" value="UniProtKB"/>
</dbReference>
<dbReference type="GO" id="GO:0005886">
    <property type="term" value="C:plasma membrane"/>
    <property type="evidence" value="ECO:0000314"/>
    <property type="project" value="HPA"/>
</dbReference>
<dbReference type="GO" id="GO:0005524">
    <property type="term" value="F:ATP binding"/>
    <property type="evidence" value="ECO:0000314"/>
    <property type="project" value="HGNC-UCL"/>
</dbReference>
<dbReference type="GO" id="GO:0089720">
    <property type="term" value="F:caspase binding"/>
    <property type="evidence" value="ECO:0000353"/>
    <property type="project" value="ARUK-UCL"/>
</dbReference>
<dbReference type="GO" id="GO:0061133">
    <property type="term" value="F:endopeptidase activator activity"/>
    <property type="evidence" value="ECO:0000316"/>
    <property type="project" value="ARUK-UCL"/>
</dbReference>
<dbReference type="GO" id="GO:0042802">
    <property type="term" value="F:identical protein binding"/>
    <property type="evidence" value="ECO:0000353"/>
    <property type="project" value="IntAct"/>
</dbReference>
<dbReference type="GO" id="GO:0000287">
    <property type="term" value="F:magnesium ion binding"/>
    <property type="evidence" value="ECO:0000304"/>
    <property type="project" value="HGNC-UCL"/>
</dbReference>
<dbReference type="GO" id="GO:0042803">
    <property type="term" value="F:protein homodimerization activity"/>
    <property type="evidence" value="ECO:0000314"/>
    <property type="project" value="HGNC-UCL"/>
</dbReference>
<dbReference type="GO" id="GO:0002218">
    <property type="term" value="P:activation of innate immune response"/>
    <property type="evidence" value="ECO:0000250"/>
    <property type="project" value="UniProtKB"/>
</dbReference>
<dbReference type="GO" id="GO:0006915">
    <property type="term" value="P:apoptotic process"/>
    <property type="evidence" value="ECO:0007669"/>
    <property type="project" value="UniProtKB-KW"/>
</dbReference>
<dbReference type="GO" id="GO:0042742">
    <property type="term" value="P:defense response to bacterium"/>
    <property type="evidence" value="ECO:0000314"/>
    <property type="project" value="HGNC-UCL"/>
</dbReference>
<dbReference type="GO" id="GO:0016045">
    <property type="term" value="P:detection of bacterium"/>
    <property type="evidence" value="ECO:0000314"/>
    <property type="project" value="HGNC-UCL"/>
</dbReference>
<dbReference type="GO" id="GO:0046456">
    <property type="term" value="P:icosanoid biosynthetic process"/>
    <property type="evidence" value="ECO:0000303"/>
    <property type="project" value="ComplexPortal"/>
</dbReference>
<dbReference type="GO" id="GO:0006954">
    <property type="term" value="P:inflammatory response"/>
    <property type="evidence" value="ECO:0000250"/>
    <property type="project" value="UniProtKB"/>
</dbReference>
<dbReference type="GO" id="GO:0045087">
    <property type="term" value="P:innate immune response"/>
    <property type="evidence" value="ECO:0007669"/>
    <property type="project" value="UniProtKB-KW"/>
</dbReference>
<dbReference type="GO" id="GO:0002221">
    <property type="term" value="P:pattern recognition receptor signaling pathway"/>
    <property type="evidence" value="ECO:0000303"/>
    <property type="project" value="ComplexPortal"/>
</dbReference>
<dbReference type="GO" id="GO:0043065">
    <property type="term" value="P:positive regulation of apoptotic process"/>
    <property type="evidence" value="ECO:0000314"/>
    <property type="project" value="UniProtKB"/>
</dbReference>
<dbReference type="GO" id="GO:0050729">
    <property type="term" value="P:positive regulation of inflammatory response"/>
    <property type="evidence" value="ECO:0000303"/>
    <property type="project" value="ComplexPortal"/>
</dbReference>
<dbReference type="GO" id="GO:0032731">
    <property type="term" value="P:positive regulation of interleukin-1 beta production"/>
    <property type="evidence" value="ECO:0000316"/>
    <property type="project" value="HGNC-UCL"/>
</dbReference>
<dbReference type="GO" id="GO:0051092">
    <property type="term" value="P:positive regulation of NF-kappaB transcription factor activity"/>
    <property type="evidence" value="ECO:0000314"/>
    <property type="project" value="UniProtKB"/>
</dbReference>
<dbReference type="GO" id="GO:0010954">
    <property type="term" value="P:positive regulation of protein processing"/>
    <property type="evidence" value="ECO:0000316"/>
    <property type="project" value="ARUK-UCL"/>
</dbReference>
<dbReference type="GO" id="GO:0051260">
    <property type="term" value="P:protein homooligomerization"/>
    <property type="evidence" value="ECO:0000250"/>
    <property type="project" value="UniProtKB"/>
</dbReference>
<dbReference type="GO" id="GO:0070269">
    <property type="term" value="P:pyroptotic inflammatory response"/>
    <property type="evidence" value="ECO:0000250"/>
    <property type="project" value="UniProtKB"/>
</dbReference>
<dbReference type="CDD" id="cd01671">
    <property type="entry name" value="CARD"/>
    <property type="match status" value="1"/>
</dbReference>
<dbReference type="FunFam" id="1.10.533.10:FF:000068">
    <property type="entry name" value="NLR family CARD domain containing 4"/>
    <property type="match status" value="1"/>
</dbReference>
<dbReference type="FunFam" id="3.80.10.10:FF:000409">
    <property type="entry name" value="NLR family CARD domain containing 4"/>
    <property type="match status" value="1"/>
</dbReference>
<dbReference type="FunFam" id="1.10.1900.50:FF:000001">
    <property type="entry name" value="NLR family CARD domain-containing protein 4"/>
    <property type="match status" value="1"/>
</dbReference>
<dbReference type="FunFam" id="3.40.50.300:FF:001292">
    <property type="entry name" value="NLR family CARD domain-containing protein 4"/>
    <property type="match status" value="1"/>
</dbReference>
<dbReference type="Gene3D" id="1.10.1900.50">
    <property type="match status" value="1"/>
</dbReference>
<dbReference type="Gene3D" id="1.10.533.10">
    <property type="entry name" value="Death Domain, Fas"/>
    <property type="match status" value="1"/>
</dbReference>
<dbReference type="Gene3D" id="3.40.50.300">
    <property type="entry name" value="P-loop containing nucleotide triphosphate hydrolases"/>
    <property type="match status" value="1"/>
</dbReference>
<dbReference type="Gene3D" id="3.80.10.10">
    <property type="entry name" value="Ribonuclease Inhibitor"/>
    <property type="match status" value="2"/>
</dbReference>
<dbReference type="InterPro" id="IPR001315">
    <property type="entry name" value="CARD"/>
</dbReference>
<dbReference type="InterPro" id="IPR011029">
    <property type="entry name" value="DEATH-like_dom_sf"/>
</dbReference>
<dbReference type="InterPro" id="IPR032675">
    <property type="entry name" value="LRR_dom_sf"/>
</dbReference>
<dbReference type="InterPro" id="IPR007111">
    <property type="entry name" value="NACHT_NTPase"/>
</dbReference>
<dbReference type="InterPro" id="IPR042220">
    <property type="entry name" value="NLRC4"/>
</dbReference>
<dbReference type="InterPro" id="IPR053882">
    <property type="entry name" value="Nlrc4-like_WHD"/>
</dbReference>
<dbReference type="InterPro" id="IPR040535">
    <property type="entry name" value="NLRC4_HD"/>
</dbReference>
<dbReference type="InterPro" id="IPR027417">
    <property type="entry name" value="P-loop_NTPase"/>
</dbReference>
<dbReference type="PANTHER" id="PTHR47688">
    <property type="entry name" value="NLR FAMILY CARD DOMAIN-CONTAINING PROTEIN 4"/>
    <property type="match status" value="1"/>
</dbReference>
<dbReference type="PANTHER" id="PTHR47688:SF1">
    <property type="entry name" value="NLR FAMILY CARD DOMAIN-CONTAINING PROTEIN 4"/>
    <property type="match status" value="1"/>
</dbReference>
<dbReference type="Pfam" id="PF00619">
    <property type="entry name" value="CARD"/>
    <property type="match status" value="1"/>
</dbReference>
<dbReference type="Pfam" id="PF05729">
    <property type="entry name" value="NACHT"/>
    <property type="match status" value="1"/>
</dbReference>
<dbReference type="Pfam" id="PF22524">
    <property type="entry name" value="Nlrc4-like_WHD"/>
    <property type="match status" value="1"/>
</dbReference>
<dbReference type="Pfam" id="PF17889">
    <property type="entry name" value="NLRC4_HD"/>
    <property type="match status" value="1"/>
</dbReference>
<dbReference type="SUPFAM" id="SSF47986">
    <property type="entry name" value="DEATH domain"/>
    <property type="match status" value="1"/>
</dbReference>
<dbReference type="SUPFAM" id="SSF52540">
    <property type="entry name" value="P-loop containing nucleoside triphosphate hydrolases"/>
    <property type="match status" value="1"/>
</dbReference>
<dbReference type="SUPFAM" id="SSF52047">
    <property type="entry name" value="RNI-like"/>
    <property type="match status" value="1"/>
</dbReference>
<dbReference type="PROSITE" id="PS50209">
    <property type="entry name" value="CARD"/>
    <property type="match status" value="1"/>
</dbReference>
<dbReference type="PROSITE" id="PS50837">
    <property type="entry name" value="NACHT"/>
    <property type="match status" value="1"/>
</dbReference>
<feature type="chain" id="PRO_0000144087" description="NLR family CARD domain-containing protein 4">
    <location>
        <begin position="1"/>
        <end position="1024"/>
    </location>
</feature>
<feature type="domain" description="CARD" evidence="3">
    <location>
        <begin position="1"/>
        <end position="88"/>
    </location>
</feature>
<feature type="domain" description="NACHT" evidence="4">
    <location>
        <begin position="163"/>
        <end position="476"/>
    </location>
</feature>
<feature type="repeat" description="LRR 1">
    <location>
        <begin position="578"/>
        <end position="598"/>
    </location>
</feature>
<feature type="repeat" description="LRR 2">
    <location>
        <begin position="656"/>
        <end position="679"/>
    </location>
</feature>
<feature type="repeat" description="LRR 3">
    <location>
        <begin position="735"/>
        <end position="758"/>
    </location>
</feature>
<feature type="repeat" description="LRR 4">
    <location>
        <begin position="762"/>
        <end position="785"/>
    </location>
</feature>
<feature type="repeat" description="LRR 5">
    <location>
        <begin position="787"/>
        <end position="812"/>
    </location>
</feature>
<feature type="repeat" description="LRR 6">
    <location>
        <begin position="824"/>
        <end position="847"/>
    </location>
</feature>
<feature type="repeat" description="LRR 7">
    <location>
        <begin position="848"/>
        <end position="870"/>
    </location>
</feature>
<feature type="repeat" description="LRR 8">
    <location>
        <begin position="878"/>
        <end position="902"/>
    </location>
</feature>
<feature type="repeat" description="LRR 9">
    <location>
        <begin position="911"/>
        <end position="933"/>
    </location>
</feature>
<feature type="repeat" description="LRR 10">
    <location>
        <begin position="936"/>
        <end position="963"/>
    </location>
</feature>
<feature type="repeat" description="LRR 11">
    <location>
        <begin position="965"/>
        <end position="985"/>
    </location>
</feature>
<feature type="repeat" description="LRR 12">
    <location>
        <begin position="999"/>
        <end position="1021"/>
    </location>
</feature>
<feature type="region of interest" description="Nucleotide-binding domain (NBD)" evidence="1">
    <location>
        <begin position="95"/>
        <end position="298"/>
    </location>
</feature>
<feature type="region of interest" description="Winged-helix domain (WHD)" evidence="1">
    <location>
        <begin position="356"/>
        <end position="463"/>
    </location>
</feature>
<feature type="binding site" evidence="4">
    <location>
        <begin position="169"/>
        <end position="176"/>
    </location>
    <ligand>
        <name>ATP</name>
        <dbReference type="ChEBI" id="CHEBI:30616"/>
    </ligand>
</feature>
<feature type="modified residue" description="Phosphoserine" evidence="2">
    <location>
        <position position="533"/>
    </location>
</feature>
<feature type="splice variant" id="VSP_000784" description="In isoform 2." evidence="14">
    <location>
        <begin position="89"/>
        <end position="753"/>
    </location>
</feature>
<feature type="splice variant" id="VSP_000787" description="In isoform 4." evidence="14">
    <original>FHQ</original>
    <variation>LTA</variation>
    <location>
        <begin position="90"/>
        <end position="92"/>
    </location>
</feature>
<feature type="splice variant" id="VSP_000788" description="In isoform 4." evidence="14">
    <location>
        <begin position="93"/>
        <end position="1024"/>
    </location>
</feature>
<feature type="splice variant" id="VSP_000785" description="In isoform 3." evidence="14">
    <original>NG</original>
    <variation>VL</variation>
    <location>
        <begin position="155"/>
        <end position="156"/>
    </location>
</feature>
<feature type="splice variant" id="VSP_000786" description="In isoform 3." evidence="14">
    <location>
        <begin position="157"/>
        <end position="1024"/>
    </location>
</feature>
<feature type="sequence variant" id="VAR_072484" description="In AIFEC; results in a gain of function mutation with constitutive activation of caspase-1; dbSNP:rs587777840." evidence="8">
    <original>T</original>
    <variation>S</variation>
    <location>
        <position position="337"/>
    </location>
</feature>
<feature type="sequence variant" id="VAR_072485" description="In AIFEC; results in a gain of function mutation with constitutive activation of caspase-1; dbSNP:rs587781260." evidence="9">
    <original>V</original>
    <variation>A</variation>
    <location>
        <position position="341"/>
    </location>
</feature>
<feature type="sequence variant" id="VAR_072645" description="In FCAS4; the mutation increases oligomerization of the NLRC4 protein; results in hyperactivation of caspase-1 with an increase in IL1B protein secretion; dbSNP:rs606231460." evidence="10">
    <original>H</original>
    <variation>P</variation>
    <location>
        <position position="443"/>
    </location>
</feature>
<feature type="sequence conflict" description="In Ref. 6; BAF85362." evidence="15" ref="6">
    <original>N</original>
    <variation>D</variation>
    <location>
        <position position="39"/>
    </location>
</feature>
<feature type="sequence conflict" description="In Ref. 2; AAK14776." evidence="15" ref="2">
    <original>V</original>
    <variation>I</variation>
    <location>
        <position position="138"/>
    </location>
</feature>
<feature type="sequence conflict" description="In Ref. 2; AAK14776." evidence="15" ref="2">
    <original>C</original>
    <variation>R</variation>
    <location>
        <position position="393"/>
    </location>
</feature>
<feature type="sequence conflict" description="In Ref. 4; AAK53443." evidence="15" ref="4">
    <original>V</original>
    <variation>A</variation>
    <location>
        <position position="420"/>
    </location>
</feature>
<feature type="sequence conflict" description="In Ref. 1; AAK38730." evidence="15" ref="1">
    <original>R</original>
    <variation>T</variation>
    <location>
        <position position="678"/>
    </location>
</feature>
<feature type="sequence conflict" description="In Ref. 6; BAG53062." evidence="15" ref="6">
    <original>K</original>
    <variation>E</variation>
    <location>
        <position position="791"/>
    </location>
</feature>
<feature type="helix" evidence="17">
    <location>
        <begin position="2"/>
        <end position="11"/>
    </location>
</feature>
<feature type="helix" evidence="17">
    <location>
        <begin position="17"/>
        <end position="29"/>
    </location>
</feature>
<feature type="helix" evidence="17">
    <location>
        <begin position="35"/>
        <end position="41"/>
    </location>
</feature>
<feature type="helix" evidence="17">
    <location>
        <begin position="47"/>
        <end position="58"/>
    </location>
</feature>
<feature type="helix" evidence="17">
    <location>
        <begin position="64"/>
        <end position="75"/>
    </location>
</feature>
<feature type="helix" evidence="17">
    <location>
        <begin position="78"/>
        <end position="84"/>
    </location>
</feature>
<comment type="function">
    <text evidence="2 6">Key component of inflammasomes that indirectly senses specific proteins from pathogenic bacteria and fungi and responds by assembling an inflammasome complex that promotes caspase-1 activation, cytokine production and macrophage pyroptosis (PubMed:15107016). The NLRC4 inflammasome is activated as part of the innate immune response to a range of intracellular bacteria (By similarity).</text>
</comment>
<comment type="subunit">
    <text evidence="2 7 8 11">Homooligomer; homooligomerizes to induce formation of the NLRC4 inflammasome (PubMed:25385754, PubMed:33420028). Homooligomerizes following activation by pathogenic proteins (By similarity). Component of the NLRC4 inflammasome, at least composed of NLRC4 and caspase-1 (CASP1) (By similarity). Some NLRC4 inflammasomes contain PYCARD/ASC, while some others directly contact and activate CASP1 (PubMed:25217959). Interacts (via CARD domain) with PYCARD/ASC, pro-caspase-1 (CASP1), NOD2, BCL10 and NALP1 (NAC) by CARD-CARD interaction (PubMed:15107016). Interacts with EIF2AK2/PKR (PubMed:22801494).</text>
</comment>
<comment type="interaction">
    <interactant intactId="EBI-1222527">
        <id>Q9NPP4</id>
    </interactant>
    <interactant intactId="EBI-516667">
        <id>P29466</id>
        <label>CASP1</label>
    </interactant>
    <organismsDiffer>false</organismsDiffer>
    <experiments>4</experiments>
</comment>
<comment type="interaction">
    <interactant intactId="EBI-1222527">
        <id>Q9NPP4</id>
    </interactant>
    <interactant intactId="EBI-1222527">
        <id>Q9NPP4</id>
        <label>NLRC4</label>
    </interactant>
    <organismsDiffer>false</organismsDiffer>
    <experiments>3</experiments>
</comment>
<comment type="interaction">
    <interactant intactId="EBI-15944387">
        <id>Q9NPP4-1</id>
    </interactant>
    <interactant intactId="EBI-15944232">
        <id>Q48824</id>
        <label>flaA</label>
    </interactant>
    <organismsDiffer>true</organismsDiffer>
    <experiments>3</experiments>
</comment>
<comment type="subcellular location">
    <subcellularLocation>
        <location evidence="5">Cytoplasm</location>
    </subcellularLocation>
    <subcellularLocation>
        <location evidence="2">Cytoplasm</location>
        <location evidence="2">Cytosol</location>
    </subcellularLocation>
    <subcellularLocation>
        <location evidence="6 11">Inflammasome</location>
    </subcellularLocation>
</comment>
<comment type="alternative products">
    <event type="alternative splicing"/>
    <isoform>
        <id>Q9NPP4-1</id>
        <name>1</name>
        <name>CLANA</name>
        <sequence type="displayed"/>
    </isoform>
    <isoform>
        <id>Q9NPP4-2</id>
        <name>2</name>
        <name>CLANB</name>
        <sequence type="described" ref="VSP_000784"/>
    </isoform>
    <isoform>
        <id>Q9NPP4-3</id>
        <name>3</name>
        <name>CLANC</name>
        <sequence type="described" ref="VSP_000785 VSP_000786"/>
    </isoform>
    <isoform>
        <id>Q9NPP4-4</id>
        <name>4</name>
        <name>CLAND</name>
        <sequence type="described" ref="VSP_000787 VSP_000788"/>
    </isoform>
</comment>
<comment type="tissue specificity">
    <text>Isoform 2 is expressed ubiquitously, although highly expressed in lung and spleen. Isoform 1 is highly expressed in lung, followed by leukocytes especially monocytes, lymph node, colon, brain, prostate, placenta, spleen, bone marrow and fetal liver. Isoform 4 is only detected in brain.</text>
</comment>
<comment type="domain">
    <text evidence="2">In an autoinhibited form the C-terminal leucine-rich repeat (LRR) domain is positioned to sterically occlude one side of the NBD domain and consequently sequester NLRC4 in a monomeric state. An ADP-mediated interaction between the NBD and the WHD also contributes to the autoinhibition.</text>
</comment>
<comment type="PTM">
    <text evidence="2">Phosphorylated at Ser-533 following infection of macrophages with S.typhimurium (Salmonella). Phosphorylation is essential for NLRC4 inflammasome function to promote caspase-1 activation and pyroptosis. PRKCD phosphorylates Ser-533 in vitro.</text>
</comment>
<comment type="disease" evidence="8 9">
    <disease id="DI-04246">
        <name>Autoinflammation with infantile enterocolitis</name>
        <acronym>AIFEC</acronym>
        <description>An autosomal dominant disorder characterized by neonatal-onset enterocolitis, periodic fever, and fatal or near-fatal episodes of autoinflammation. Affected individuals tend to have poor overall growth and gastrointestinal symptoms in infancy, recurrent febrile episodes with splenomegaly, and sometimes hematologic disturbances, arthralgias, or myalgias.</description>
        <dbReference type="MIM" id="616050"/>
    </disease>
    <text>The disease is caused by variants affecting the gene represented in this entry.</text>
</comment>
<comment type="disease" evidence="10">
    <disease id="DI-04279">
        <name>Familial cold autoinflammatory syndrome 4</name>
        <acronym>FCAS4</acronym>
        <description>A form of autoinflammatory syndrome, a rare autosomal dominant systemic disease characterized by recurrent episodes of maculopapular rash associated with arthralgias, myalgias, fever and chills, swelling of the extremities, and conjunctivitis after generalized exposure to cold.</description>
        <dbReference type="MIM" id="616115"/>
    </disease>
    <text>The disease is caused by variants affecting the gene represented in this entry.</text>
</comment>
<comment type="online information" name="Atlas of Genetics and Cytogenetics in Oncology and Haematology">
    <link uri="https://atlasgeneticsoncology.org/gene/43189/NLRC4"/>
</comment>
<proteinExistence type="evidence at protein level"/>
<evidence type="ECO:0000250" key="1"/>
<evidence type="ECO:0000250" key="2">
    <source>
        <dbReference type="UniProtKB" id="Q3UP24"/>
    </source>
</evidence>
<evidence type="ECO:0000255" key="3">
    <source>
        <dbReference type="PROSITE-ProRule" id="PRU00046"/>
    </source>
</evidence>
<evidence type="ECO:0000255" key="4">
    <source>
        <dbReference type="PROSITE-ProRule" id="PRU00136"/>
    </source>
</evidence>
<evidence type="ECO:0000269" key="5">
    <source>
    </source>
</evidence>
<evidence type="ECO:0000269" key="6">
    <source>
    </source>
</evidence>
<evidence type="ECO:0000269" key="7">
    <source>
    </source>
</evidence>
<evidence type="ECO:0000269" key="8">
    <source>
    </source>
</evidence>
<evidence type="ECO:0000269" key="9">
    <source>
    </source>
</evidence>
<evidence type="ECO:0000269" key="10">
    <source>
    </source>
</evidence>
<evidence type="ECO:0000269" key="11">
    <source>
    </source>
</evidence>
<evidence type="ECO:0000303" key="12">
    <source>
    </source>
</evidence>
<evidence type="ECO:0000303" key="13">
    <source>
    </source>
</evidence>
<evidence type="ECO:0000303" key="14">
    <source>
    </source>
</evidence>
<evidence type="ECO:0000305" key="15"/>
<evidence type="ECO:0007744" key="16">
    <source>
        <dbReference type="PDB" id="6K8J"/>
    </source>
</evidence>
<evidence type="ECO:0007829" key="17">
    <source>
        <dbReference type="PDB" id="6K8J"/>
    </source>
</evidence>
<reference key="1">
    <citation type="journal article" date="2001" name="Biochem. Biophys. Res. Commun.">
        <title>Human CARD12 is a novel CED4/Apaf-1 family member that induces apoptosis.</title>
        <authorList>
            <person name="Geddes B.J."/>
            <person name="Wang L."/>
            <person name="Huang W.-J."/>
            <person name="Lavellee M."/>
            <person name="Manji G.A."/>
            <person name="Brown M."/>
            <person name="Jurman M."/>
            <person name="Cao J."/>
            <person name="Morgenstern J."/>
            <person name="Merriam S."/>
            <person name="Glucksmann M.A."/>
            <person name="DiStefano P.S."/>
            <person name="Bertin J."/>
        </authorList>
    </citation>
    <scope>NUCLEOTIDE SEQUENCE [MRNA] (ISOFORM 1)</scope>
</reference>
<reference key="2">
    <citation type="journal article" date="2001" name="Genomics">
        <title>CLAN, a novel human CED-4-like gene.</title>
        <authorList>
            <person name="Damiano J.S."/>
            <person name="Stehlik C."/>
            <person name="Pio F."/>
            <person name="Godzik A."/>
            <person name="Reed J.C."/>
        </authorList>
    </citation>
    <scope>NUCLEOTIDE SEQUENCE [MRNA] (ISOFORMS 1; 2; 3 AND 4)</scope>
    <source>
        <tissue>Lung</tissue>
    </source>
</reference>
<reference key="3">
    <citation type="journal article" date="2001" name="J. Biol. Chem.">
        <title>Identification of Ipaf, a human caspase-1-activating protein related to Apaf-1.</title>
        <authorList>
            <person name="Poyet J.-L."/>
            <person name="Srinivasula S.M."/>
            <person name="Tnani M."/>
            <person name="Razmara M."/>
            <person name="Fernandes-Alnemri T."/>
            <person name="Alnemri E.S."/>
        </authorList>
    </citation>
    <scope>NUCLEOTIDE SEQUENCE [MRNA] (ISOFORM 1)</scope>
    <scope>SUBCELLULAR LOCATION</scope>
    <source>
        <tissue>Leukocyte</tissue>
    </source>
</reference>
<reference key="4">
    <citation type="submission" date="2001-05" db="EMBL/GenBank/DDBJ databases">
        <title>Differential expression of the caspase recruitment domain protein 12 (CARD12) during monocytic differentiation.</title>
        <authorList>
            <person name="Gingras M."/>
            <person name="Qiu J."/>
            <person name="Margolin J.F."/>
        </authorList>
    </citation>
    <scope>NUCLEOTIDE SEQUENCE [MRNA] (ISOFORM 1)</scope>
</reference>
<reference key="5">
    <citation type="journal article" date="2003" name="Genome Res.">
        <title>The secreted protein discovery initiative (SPDI), a large-scale effort to identify novel human secreted and transmembrane proteins: a bioinformatics assessment.</title>
        <authorList>
            <person name="Clark H.F."/>
            <person name="Gurney A.L."/>
            <person name="Abaya E."/>
            <person name="Baker K."/>
            <person name="Baldwin D.T."/>
            <person name="Brush J."/>
            <person name="Chen J."/>
            <person name="Chow B."/>
            <person name="Chui C."/>
            <person name="Crowley C."/>
            <person name="Currell B."/>
            <person name="Deuel B."/>
            <person name="Dowd P."/>
            <person name="Eaton D."/>
            <person name="Foster J.S."/>
            <person name="Grimaldi C."/>
            <person name="Gu Q."/>
            <person name="Hass P.E."/>
            <person name="Heldens S."/>
            <person name="Huang A."/>
            <person name="Kim H.S."/>
            <person name="Klimowski L."/>
            <person name="Jin Y."/>
            <person name="Johnson S."/>
            <person name="Lee J."/>
            <person name="Lewis L."/>
            <person name="Liao D."/>
            <person name="Mark M.R."/>
            <person name="Robbie E."/>
            <person name="Sanchez C."/>
            <person name="Schoenfeld J."/>
            <person name="Seshagiri S."/>
            <person name="Simmons L."/>
            <person name="Singh J."/>
            <person name="Smith V."/>
            <person name="Stinson J."/>
            <person name="Vagts A."/>
            <person name="Vandlen R.L."/>
            <person name="Watanabe C."/>
            <person name="Wieand D."/>
            <person name="Woods K."/>
            <person name="Xie M.-H."/>
            <person name="Yansura D.G."/>
            <person name="Yi S."/>
            <person name="Yu G."/>
            <person name="Yuan J."/>
            <person name="Zhang M."/>
            <person name="Zhang Z."/>
            <person name="Goddard A.D."/>
            <person name="Wood W.I."/>
            <person name="Godowski P.J."/>
            <person name="Gray A.M."/>
        </authorList>
    </citation>
    <scope>NUCLEOTIDE SEQUENCE [LARGE SCALE MRNA] (ISOFORM 1)</scope>
</reference>
<reference key="6">
    <citation type="journal article" date="2004" name="Nat. Genet.">
        <title>Complete sequencing and characterization of 21,243 full-length human cDNAs.</title>
        <authorList>
            <person name="Ota T."/>
            <person name="Suzuki Y."/>
            <person name="Nishikawa T."/>
            <person name="Otsuki T."/>
            <person name="Sugiyama T."/>
            <person name="Irie R."/>
            <person name="Wakamatsu A."/>
            <person name="Hayashi K."/>
            <person name="Sato H."/>
            <person name="Nagai K."/>
            <person name="Kimura K."/>
            <person name="Makita H."/>
            <person name="Sekine M."/>
            <person name="Obayashi M."/>
            <person name="Nishi T."/>
            <person name="Shibahara T."/>
            <person name="Tanaka T."/>
            <person name="Ishii S."/>
            <person name="Yamamoto J."/>
            <person name="Saito K."/>
            <person name="Kawai Y."/>
            <person name="Isono Y."/>
            <person name="Nakamura Y."/>
            <person name="Nagahari K."/>
            <person name="Murakami K."/>
            <person name="Yasuda T."/>
            <person name="Iwayanagi T."/>
            <person name="Wagatsuma M."/>
            <person name="Shiratori A."/>
            <person name="Sudo H."/>
            <person name="Hosoiri T."/>
            <person name="Kaku Y."/>
            <person name="Kodaira H."/>
            <person name="Kondo H."/>
            <person name="Sugawara M."/>
            <person name="Takahashi M."/>
            <person name="Kanda K."/>
            <person name="Yokoi T."/>
            <person name="Furuya T."/>
            <person name="Kikkawa E."/>
            <person name="Omura Y."/>
            <person name="Abe K."/>
            <person name="Kamihara K."/>
            <person name="Katsuta N."/>
            <person name="Sato K."/>
            <person name="Tanikawa M."/>
            <person name="Yamazaki M."/>
            <person name="Ninomiya K."/>
            <person name="Ishibashi T."/>
            <person name="Yamashita H."/>
            <person name="Murakawa K."/>
            <person name="Fujimori K."/>
            <person name="Tanai H."/>
            <person name="Kimata M."/>
            <person name="Watanabe M."/>
            <person name="Hiraoka S."/>
            <person name="Chiba Y."/>
            <person name="Ishida S."/>
            <person name="Ono Y."/>
            <person name="Takiguchi S."/>
            <person name="Watanabe S."/>
            <person name="Yosida M."/>
            <person name="Hotuta T."/>
            <person name="Kusano J."/>
            <person name="Kanehori K."/>
            <person name="Takahashi-Fujii A."/>
            <person name="Hara H."/>
            <person name="Tanase T.-O."/>
            <person name="Nomura Y."/>
            <person name="Togiya S."/>
            <person name="Komai F."/>
            <person name="Hara R."/>
            <person name="Takeuchi K."/>
            <person name="Arita M."/>
            <person name="Imose N."/>
            <person name="Musashino K."/>
            <person name="Yuuki H."/>
            <person name="Oshima A."/>
            <person name="Sasaki N."/>
            <person name="Aotsuka S."/>
            <person name="Yoshikawa Y."/>
            <person name="Matsunawa H."/>
            <person name="Ichihara T."/>
            <person name="Shiohata N."/>
            <person name="Sano S."/>
            <person name="Moriya S."/>
            <person name="Momiyama H."/>
            <person name="Satoh N."/>
            <person name="Takami S."/>
            <person name="Terashima Y."/>
            <person name="Suzuki O."/>
            <person name="Nakagawa S."/>
            <person name="Senoh A."/>
            <person name="Mizoguchi H."/>
            <person name="Goto Y."/>
            <person name="Shimizu F."/>
            <person name="Wakebe H."/>
            <person name="Hishigaki H."/>
            <person name="Watanabe T."/>
            <person name="Sugiyama A."/>
            <person name="Takemoto M."/>
            <person name="Kawakami B."/>
            <person name="Yamazaki M."/>
            <person name="Watanabe K."/>
            <person name="Kumagai A."/>
            <person name="Itakura S."/>
            <person name="Fukuzumi Y."/>
            <person name="Fujimori Y."/>
            <person name="Komiyama M."/>
            <person name="Tashiro H."/>
            <person name="Tanigami A."/>
            <person name="Fujiwara T."/>
            <person name="Ono T."/>
            <person name="Yamada K."/>
            <person name="Fujii Y."/>
            <person name="Ozaki K."/>
            <person name="Hirao M."/>
            <person name="Ohmori Y."/>
            <person name="Kawabata A."/>
            <person name="Hikiji T."/>
            <person name="Kobatake N."/>
            <person name="Inagaki H."/>
            <person name="Ikema Y."/>
            <person name="Okamoto S."/>
            <person name="Okitani R."/>
            <person name="Kawakami T."/>
            <person name="Noguchi S."/>
            <person name="Itoh T."/>
            <person name="Shigeta K."/>
            <person name="Senba T."/>
            <person name="Matsumura K."/>
            <person name="Nakajima Y."/>
            <person name="Mizuno T."/>
            <person name="Morinaga M."/>
            <person name="Sasaki M."/>
            <person name="Togashi T."/>
            <person name="Oyama M."/>
            <person name="Hata H."/>
            <person name="Watanabe M."/>
            <person name="Komatsu T."/>
            <person name="Mizushima-Sugano J."/>
            <person name="Satoh T."/>
            <person name="Shirai Y."/>
            <person name="Takahashi Y."/>
            <person name="Nakagawa K."/>
            <person name="Okumura K."/>
            <person name="Nagase T."/>
            <person name="Nomura N."/>
            <person name="Kikuchi H."/>
            <person name="Masuho Y."/>
            <person name="Yamashita R."/>
            <person name="Nakai K."/>
            <person name="Yada T."/>
            <person name="Nakamura Y."/>
            <person name="Ohara O."/>
            <person name="Isogai T."/>
            <person name="Sugano S."/>
        </authorList>
    </citation>
    <scope>NUCLEOTIDE SEQUENCE [LARGE SCALE MRNA] (ISOFORM 1)</scope>
    <source>
        <tissue>Thymus</tissue>
        <tissue>Uterus</tissue>
    </source>
</reference>
<reference key="7">
    <citation type="journal article" date="2005" name="Nature">
        <title>Generation and annotation of the DNA sequences of human chromosomes 2 and 4.</title>
        <authorList>
            <person name="Hillier L.W."/>
            <person name="Graves T.A."/>
            <person name="Fulton R.S."/>
            <person name="Fulton L.A."/>
            <person name="Pepin K.H."/>
            <person name="Minx P."/>
            <person name="Wagner-McPherson C."/>
            <person name="Layman D."/>
            <person name="Wylie K."/>
            <person name="Sekhon M."/>
            <person name="Becker M.C."/>
            <person name="Fewell G.A."/>
            <person name="Delehaunty K.D."/>
            <person name="Miner T.L."/>
            <person name="Nash W.E."/>
            <person name="Kremitzki C."/>
            <person name="Oddy L."/>
            <person name="Du H."/>
            <person name="Sun H."/>
            <person name="Bradshaw-Cordum H."/>
            <person name="Ali J."/>
            <person name="Carter J."/>
            <person name="Cordes M."/>
            <person name="Harris A."/>
            <person name="Isak A."/>
            <person name="van Brunt A."/>
            <person name="Nguyen C."/>
            <person name="Du F."/>
            <person name="Courtney L."/>
            <person name="Kalicki J."/>
            <person name="Ozersky P."/>
            <person name="Abbott S."/>
            <person name="Armstrong J."/>
            <person name="Belter E.A."/>
            <person name="Caruso L."/>
            <person name="Cedroni M."/>
            <person name="Cotton M."/>
            <person name="Davidson T."/>
            <person name="Desai A."/>
            <person name="Elliott G."/>
            <person name="Erb T."/>
            <person name="Fronick C."/>
            <person name="Gaige T."/>
            <person name="Haakenson W."/>
            <person name="Haglund K."/>
            <person name="Holmes A."/>
            <person name="Harkins R."/>
            <person name="Kim K."/>
            <person name="Kruchowski S.S."/>
            <person name="Strong C.M."/>
            <person name="Grewal N."/>
            <person name="Goyea E."/>
            <person name="Hou S."/>
            <person name="Levy A."/>
            <person name="Martinka S."/>
            <person name="Mead K."/>
            <person name="McLellan M.D."/>
            <person name="Meyer R."/>
            <person name="Randall-Maher J."/>
            <person name="Tomlinson C."/>
            <person name="Dauphin-Kohlberg S."/>
            <person name="Kozlowicz-Reilly A."/>
            <person name="Shah N."/>
            <person name="Swearengen-Shahid S."/>
            <person name="Snider J."/>
            <person name="Strong J.T."/>
            <person name="Thompson J."/>
            <person name="Yoakum M."/>
            <person name="Leonard S."/>
            <person name="Pearman C."/>
            <person name="Trani L."/>
            <person name="Radionenko M."/>
            <person name="Waligorski J.E."/>
            <person name="Wang C."/>
            <person name="Rock S.M."/>
            <person name="Tin-Wollam A.-M."/>
            <person name="Maupin R."/>
            <person name="Latreille P."/>
            <person name="Wendl M.C."/>
            <person name="Yang S.-P."/>
            <person name="Pohl C."/>
            <person name="Wallis J.W."/>
            <person name="Spieth J."/>
            <person name="Bieri T.A."/>
            <person name="Berkowicz N."/>
            <person name="Nelson J.O."/>
            <person name="Osborne J."/>
            <person name="Ding L."/>
            <person name="Meyer R."/>
            <person name="Sabo A."/>
            <person name="Shotland Y."/>
            <person name="Sinha P."/>
            <person name="Wohldmann P.E."/>
            <person name="Cook L.L."/>
            <person name="Hickenbotham M.T."/>
            <person name="Eldred J."/>
            <person name="Williams D."/>
            <person name="Jones T.A."/>
            <person name="She X."/>
            <person name="Ciccarelli F.D."/>
            <person name="Izaurralde E."/>
            <person name="Taylor J."/>
            <person name="Schmutz J."/>
            <person name="Myers R.M."/>
            <person name="Cox D.R."/>
            <person name="Huang X."/>
            <person name="McPherson J.D."/>
            <person name="Mardis E.R."/>
            <person name="Clifton S.W."/>
            <person name="Warren W.C."/>
            <person name="Chinwalla A.T."/>
            <person name="Eddy S.R."/>
            <person name="Marra M.A."/>
            <person name="Ovcharenko I."/>
            <person name="Furey T.S."/>
            <person name="Miller W."/>
            <person name="Eichler E.E."/>
            <person name="Bork P."/>
            <person name="Suyama M."/>
            <person name="Torrents D."/>
            <person name="Waterston R.H."/>
            <person name="Wilson R.K."/>
        </authorList>
    </citation>
    <scope>NUCLEOTIDE SEQUENCE [LARGE SCALE GENOMIC DNA]</scope>
</reference>
<reference key="8">
    <citation type="submission" date="2005-09" db="EMBL/GenBank/DDBJ databases">
        <authorList>
            <person name="Mural R.J."/>
            <person name="Istrail S."/>
            <person name="Sutton G.G."/>
            <person name="Florea L."/>
            <person name="Halpern A.L."/>
            <person name="Mobarry C.M."/>
            <person name="Lippert R."/>
            <person name="Walenz B."/>
            <person name="Shatkay H."/>
            <person name="Dew I."/>
            <person name="Miller J.R."/>
            <person name="Flanigan M.J."/>
            <person name="Edwards N.J."/>
            <person name="Bolanos R."/>
            <person name="Fasulo D."/>
            <person name="Halldorsson B.V."/>
            <person name="Hannenhalli S."/>
            <person name="Turner R."/>
            <person name="Yooseph S."/>
            <person name="Lu F."/>
            <person name="Nusskern D.R."/>
            <person name="Shue B.C."/>
            <person name="Zheng X.H."/>
            <person name="Zhong F."/>
            <person name="Delcher A.L."/>
            <person name="Huson D.H."/>
            <person name="Kravitz S.A."/>
            <person name="Mouchard L."/>
            <person name="Reinert K."/>
            <person name="Remington K.A."/>
            <person name="Clark A.G."/>
            <person name="Waterman M.S."/>
            <person name="Eichler E.E."/>
            <person name="Adams M.D."/>
            <person name="Hunkapiller M.W."/>
            <person name="Myers E.W."/>
            <person name="Venter J.C."/>
        </authorList>
    </citation>
    <scope>NUCLEOTIDE SEQUENCE [LARGE SCALE GENOMIC DNA]</scope>
</reference>
<reference key="9">
    <citation type="journal article" date="2004" name="Genome Res.">
        <title>The status, quality, and expansion of the NIH full-length cDNA project: the Mammalian Gene Collection (MGC).</title>
        <authorList>
            <consortium name="The MGC Project Team"/>
        </authorList>
    </citation>
    <scope>NUCLEOTIDE SEQUENCE [LARGE SCALE MRNA] (ISOFORM 1)</scope>
    <source>
        <tissue>Brain</tissue>
        <tissue>Lung</tissue>
        <tissue>Testis</tissue>
    </source>
</reference>
<reference key="10">
    <citation type="submission" date="2000-07" db="EMBL/GenBank/DDBJ databases">
        <authorList>
            <consortium name="The European IMAGE consortium"/>
        </authorList>
    </citation>
    <scope>NUCLEOTIDE SEQUENCE [LARGE SCALE MRNA] OF 586-1024 (ISOFORM 1)</scope>
</reference>
<reference key="11">
    <citation type="journal article" date="2004" name="Biochem. J.">
        <title>Heterotypic interactions among NACHT domains: implications for regulation of innate immune responses.</title>
        <authorList>
            <person name="Damiano J.S."/>
            <person name="Oliveira V."/>
            <person name="Welsh K."/>
            <person name="Reed J.C."/>
        </authorList>
    </citation>
    <scope>FUNCTION</scope>
    <scope>SUBCELLULAR LOCATION</scope>
</reference>
<reference key="12">
    <citation type="journal article" date="2012" name="Nature">
        <title>Novel role of PKR in inflammasome activation and HMGB1 release.</title>
        <authorList>
            <person name="Lu B."/>
            <person name="Nakamura T."/>
            <person name="Inouye K."/>
            <person name="Li J."/>
            <person name="Tang Y."/>
            <person name="Lundbaeck P."/>
            <person name="Valdes-Ferrer S.I."/>
            <person name="Olofsson P.S."/>
            <person name="Kalb T."/>
            <person name="Roth J."/>
            <person name="Zou Y."/>
            <person name="Erlandsson-Harris H."/>
            <person name="Yang H."/>
            <person name="Ting J.P."/>
            <person name="Wang H."/>
            <person name="Andersson U."/>
            <person name="Antoine D.J."/>
            <person name="Chavan S.S."/>
            <person name="Hotamisligil G.S."/>
            <person name="Tracey K.J."/>
        </authorList>
    </citation>
    <scope>INTERACTION WITH EIF2AK2</scope>
</reference>
<reference evidence="16" key="13">
    <citation type="journal article" date="2021" name="Nat. Commun.">
        <title>Structural basis for distinct inflammasome complex assembly by human NLRP1 and CARD8.</title>
        <authorList>
            <person name="Gong Q."/>
            <person name="Robinson K."/>
            <person name="Xu C."/>
            <person name="Huynh P.T."/>
            <person name="Chong K.H.C."/>
            <person name="Tan E.Y.J."/>
            <person name="Zhang J."/>
            <person name="Boo Z.Z."/>
            <person name="Teo D.E.T."/>
            <person name="Lay K."/>
            <person name="Zhang Y."/>
            <person name="Lim J.S.Y."/>
            <person name="Goh W.I."/>
            <person name="Wright G."/>
            <person name="Zhong F.L."/>
            <person name="Reversade B."/>
            <person name="Wu B."/>
        </authorList>
    </citation>
    <scope>STRUCTURE BY ELECTRON MICROSCOPY (3.30 ANGSTROMS) OF 1-85</scope>
</reference>
<reference key="14">
    <citation type="journal article" date="2014" name="J. Exp. Med.">
        <title>An inherited mutation in NLRC4 causes autoinflammation in human and mice.</title>
        <authorList>
            <person name="Kitamura A."/>
            <person name="Sasaki Y."/>
            <person name="Abe T."/>
            <person name="Kano H."/>
            <person name="Yasutomo K."/>
        </authorList>
    </citation>
    <scope>INVOLVEMENT IN FCAS4</scope>
    <scope>VARIANT FCAS4 PRO-443</scope>
    <scope>CHARACTERIZATION OF VARIANT FCAS4 PRO-443</scope>
    <scope>SUBUNIT</scope>
</reference>
<reference key="15">
    <citation type="journal article" date="2014" name="Nat. Genet.">
        <title>Mutation of NLRC4 causes a syndrome of enterocolitis and autoinflammation.</title>
        <authorList>
            <person name="Romberg N."/>
            <person name="Al Moussawi K."/>
            <person name="Nelson-Williams C."/>
            <person name="Stiegler A.L."/>
            <person name="Loring E."/>
            <person name="Choi M."/>
            <person name="Overton J."/>
            <person name="Meffre E."/>
            <person name="Khokha M.K."/>
            <person name="Huttner A.J."/>
            <person name="West B."/>
            <person name="Podoltsev N.A."/>
            <person name="Boggon T.J."/>
            <person name="Kazmierczak B.I."/>
            <person name="Lifton R.P."/>
        </authorList>
    </citation>
    <scope>INVOLVEMENT IN AIFEC</scope>
    <scope>VARIANT AIFEC ALA-341</scope>
    <scope>CHARACTERIZATION OF VARIANT AIFEC ALA-341</scope>
</reference>
<reference key="16">
    <citation type="journal article" date="2014" name="Nat. Genet.">
        <title>An activating NLRC4 inflammasome mutation causes autoinflammation with recurrent macrophage activation syndrome.</title>
        <authorList>
            <person name="Canna S.W."/>
            <person name="de Jesus A.A."/>
            <person name="Gouni S."/>
            <person name="Brooks S.R."/>
            <person name="Marrero B."/>
            <person name="Liu Y."/>
            <person name="DiMattia M.A."/>
            <person name="Zaal K.J."/>
            <person name="Sanchez G.A."/>
            <person name="Kim H."/>
            <person name="Chapelle D."/>
            <person name="Plass N."/>
            <person name="Huang Y."/>
            <person name="Villarino A.V."/>
            <person name="Biancotto A."/>
            <person name="Fleisher T.A."/>
            <person name="Duncan J.A."/>
            <person name="O'Shea J.J."/>
            <person name="Benseler S."/>
            <person name="Grom A."/>
            <person name="Deng Z."/>
            <person name="Laxer R.M."/>
            <person name="Goldbach-Mansky R."/>
        </authorList>
    </citation>
    <scope>VARIANT AIFEC SER-337</scope>
    <scope>CHARACTERIZATION OF VARIANT AIFEC SER-337</scope>
</reference>
<organism>
    <name type="scientific">Homo sapiens</name>
    <name type="common">Human</name>
    <dbReference type="NCBI Taxonomy" id="9606"/>
    <lineage>
        <taxon>Eukaryota</taxon>
        <taxon>Metazoa</taxon>
        <taxon>Chordata</taxon>
        <taxon>Craniata</taxon>
        <taxon>Vertebrata</taxon>
        <taxon>Euteleostomi</taxon>
        <taxon>Mammalia</taxon>
        <taxon>Eutheria</taxon>
        <taxon>Euarchontoglires</taxon>
        <taxon>Primates</taxon>
        <taxon>Haplorrhini</taxon>
        <taxon>Catarrhini</taxon>
        <taxon>Hominidae</taxon>
        <taxon>Homo</taxon>
    </lineage>
</organism>
<protein>
    <recommendedName>
        <fullName>NLR family CARD domain-containing protein 4</fullName>
    </recommendedName>
    <alternativeName>
        <fullName>CARD, LRR, and NACHT-containing protein</fullName>
        <shortName evidence="14">CED-4-like protein Clan</shortName>
    </alternativeName>
    <alternativeName>
        <fullName evidence="12">Caspase recruitment domain-containing protein 12</fullName>
    </alternativeName>
    <alternativeName>
        <fullName evidence="13">Ice protease-activating factor</fullName>
        <shortName evidence="13">Ipaf</shortName>
    </alternativeName>
</protein>
<sequence>MNFIKDNSRALIQRMGMTVIKQITDDLFVWNVLNREEVNIICCEKVEQDAARGIIHMILKKGSESCNLFLKSLKEWNYPLFQDLNGQSLFHQTSEGDLDDLAQDLKDLYHTPSFLNFYPLGEDIDIIFNLKSTFTEPVLWRKDQHHHRVEQLTLNGLLQALQSPCIIEGESGKGKSTLLQRIAMLWGSGKCKALTKFKFVFFLRLSRAQGGLFETLCDQLLDIPGTIRKQTFMAMLLKLRQRVLFLLDGYNEFKPQNCPEIEALIKENHRFKNMVIVTTTTECLRHIRQFGALTAEVGDMTEDSAQALIREVLIKELAEGLLLQIQKSRCLRNLMKTPLFVVITCAIQMGESEFHSHTQTTLFHTFYDLLIQKNKHKHKGVAASDFIRSLDHCGDLALEGVFSHKFDFELQDVSSVNEDVLLTTGLLCKYTAQRFKPKYKFFHKSFQEYTAGRRLSSLLTSHEPEEVTKGNGYLQKMVSISDITSTYSSLLRYTCGSSVEATRAVMKHLAAVYQHGCLLGLSIAKRPLWRQESLQSVKNTTEQEILKAININSFVECGIHLYQESTSKSALSQEFEAFFQGKSLYINSGNIPDYLFDFFEHLPNCASALDFIKLDFYGGAMASWEKAAEDTGGIHMEEAPETYIPSRAVSLFFNWKQEFRTLEVTLRDFSKLNKQDIRYLGKIFSSATSLRLQIKRCAGVAGSLSLVLSTCKNIYSLMVEASPLTIEDERHITSVTNLKTLSIHDLQNQRLPGGLTDSLGNLKNLTKLIMDNIKMNEEDAIKLAEGLKNLKKMCLFHLTHLSDIGEGMDYIVKSLSSEPCDLEEIQLVSCCLSANAVKILAQNLHNLVKLSILDLSENYLEKDGNEALHELIDRMNVLEQLTALMLPWGCDVQGSLSSLLKHLEEVPQLVKLGLKNWRLTDTEIRILGAFFGKNPLKNFQQLNLAGNRVSSDGWLAFMGVFENLKQLVFFDFSTKEFLPDPALVRKLSQVLSKLTFLQEARLVGWQFDDDDLSVITGAFKLVTA</sequence>